<evidence type="ECO:0000255" key="1">
    <source>
        <dbReference type="HAMAP-Rule" id="MF_01320"/>
    </source>
</evidence>
<evidence type="ECO:0000256" key="2">
    <source>
        <dbReference type="SAM" id="MobiDB-lite"/>
    </source>
</evidence>
<evidence type="ECO:0000305" key="3"/>
<comment type="function">
    <text evidence="1">One of the primary rRNA binding proteins. Required for association of the 30S and 50S subunits to form the 70S ribosome, for tRNA binding and peptide bond formation. It has been suggested to have peptidyltransferase activity; this is somewhat controversial. Makes several contacts with the 16S rRNA in the 70S ribosome.</text>
</comment>
<comment type="subunit">
    <text evidence="1">Part of the 50S ribosomal subunit. Forms a bridge to the 30S subunit in the 70S ribosome.</text>
</comment>
<comment type="similarity">
    <text evidence="1">Belongs to the universal ribosomal protein uL2 family.</text>
</comment>
<name>RL2_KINRD</name>
<feature type="chain" id="PRO_1000086335" description="Large ribosomal subunit protein uL2">
    <location>
        <begin position="1"/>
        <end position="278"/>
    </location>
</feature>
<feature type="region of interest" description="Disordered" evidence="2">
    <location>
        <begin position="29"/>
        <end position="53"/>
    </location>
</feature>
<feature type="region of interest" description="Disordered" evidence="2">
    <location>
        <begin position="223"/>
        <end position="278"/>
    </location>
</feature>
<feature type="compositionally biased region" description="Basic and acidic residues" evidence="2">
    <location>
        <begin position="255"/>
        <end position="268"/>
    </location>
</feature>
<feature type="compositionally biased region" description="Basic residues" evidence="2">
    <location>
        <begin position="269"/>
        <end position="278"/>
    </location>
</feature>
<dbReference type="EMBL" id="CP000750">
    <property type="protein sequence ID" value="ABS02180.1"/>
    <property type="molecule type" value="Genomic_DNA"/>
</dbReference>
<dbReference type="RefSeq" id="WP_012084978.1">
    <property type="nucleotide sequence ID" value="NC_009664.2"/>
</dbReference>
<dbReference type="SMR" id="A6W5U1"/>
<dbReference type="STRING" id="266940.Krad_0691"/>
<dbReference type="KEGG" id="kra:Krad_0691"/>
<dbReference type="eggNOG" id="COG0090">
    <property type="taxonomic scope" value="Bacteria"/>
</dbReference>
<dbReference type="HOGENOM" id="CLU_036235_2_1_11"/>
<dbReference type="OrthoDB" id="9778722at2"/>
<dbReference type="Proteomes" id="UP000001116">
    <property type="component" value="Chromosome"/>
</dbReference>
<dbReference type="GO" id="GO:0015934">
    <property type="term" value="C:large ribosomal subunit"/>
    <property type="evidence" value="ECO:0007669"/>
    <property type="project" value="InterPro"/>
</dbReference>
<dbReference type="GO" id="GO:0019843">
    <property type="term" value="F:rRNA binding"/>
    <property type="evidence" value="ECO:0007669"/>
    <property type="project" value="UniProtKB-UniRule"/>
</dbReference>
<dbReference type="GO" id="GO:0003735">
    <property type="term" value="F:structural constituent of ribosome"/>
    <property type="evidence" value="ECO:0007669"/>
    <property type="project" value="InterPro"/>
</dbReference>
<dbReference type="GO" id="GO:0016740">
    <property type="term" value="F:transferase activity"/>
    <property type="evidence" value="ECO:0007669"/>
    <property type="project" value="InterPro"/>
</dbReference>
<dbReference type="GO" id="GO:0002181">
    <property type="term" value="P:cytoplasmic translation"/>
    <property type="evidence" value="ECO:0007669"/>
    <property type="project" value="TreeGrafter"/>
</dbReference>
<dbReference type="FunFam" id="2.30.30.30:FF:000001">
    <property type="entry name" value="50S ribosomal protein L2"/>
    <property type="match status" value="1"/>
</dbReference>
<dbReference type="FunFam" id="2.40.50.140:FF:000003">
    <property type="entry name" value="50S ribosomal protein L2"/>
    <property type="match status" value="1"/>
</dbReference>
<dbReference type="FunFam" id="4.10.950.10:FF:000001">
    <property type="entry name" value="50S ribosomal protein L2"/>
    <property type="match status" value="1"/>
</dbReference>
<dbReference type="Gene3D" id="2.30.30.30">
    <property type="match status" value="1"/>
</dbReference>
<dbReference type="Gene3D" id="2.40.50.140">
    <property type="entry name" value="Nucleic acid-binding proteins"/>
    <property type="match status" value="1"/>
</dbReference>
<dbReference type="Gene3D" id="4.10.950.10">
    <property type="entry name" value="Ribosomal protein L2, domain 3"/>
    <property type="match status" value="1"/>
</dbReference>
<dbReference type="HAMAP" id="MF_01320_B">
    <property type="entry name" value="Ribosomal_uL2_B"/>
    <property type="match status" value="1"/>
</dbReference>
<dbReference type="InterPro" id="IPR012340">
    <property type="entry name" value="NA-bd_OB-fold"/>
</dbReference>
<dbReference type="InterPro" id="IPR014722">
    <property type="entry name" value="Rib_uL2_dom2"/>
</dbReference>
<dbReference type="InterPro" id="IPR002171">
    <property type="entry name" value="Ribosomal_uL2"/>
</dbReference>
<dbReference type="InterPro" id="IPR005880">
    <property type="entry name" value="Ribosomal_uL2_bac/org-type"/>
</dbReference>
<dbReference type="InterPro" id="IPR022669">
    <property type="entry name" value="Ribosomal_uL2_C"/>
</dbReference>
<dbReference type="InterPro" id="IPR022671">
    <property type="entry name" value="Ribosomal_uL2_CS"/>
</dbReference>
<dbReference type="InterPro" id="IPR014726">
    <property type="entry name" value="Ribosomal_uL2_dom3"/>
</dbReference>
<dbReference type="InterPro" id="IPR022666">
    <property type="entry name" value="Ribosomal_uL2_RNA-bd_dom"/>
</dbReference>
<dbReference type="InterPro" id="IPR008991">
    <property type="entry name" value="Translation_prot_SH3-like_sf"/>
</dbReference>
<dbReference type="NCBIfam" id="TIGR01171">
    <property type="entry name" value="rplB_bact"/>
    <property type="match status" value="1"/>
</dbReference>
<dbReference type="PANTHER" id="PTHR13691:SF5">
    <property type="entry name" value="LARGE RIBOSOMAL SUBUNIT PROTEIN UL2M"/>
    <property type="match status" value="1"/>
</dbReference>
<dbReference type="PANTHER" id="PTHR13691">
    <property type="entry name" value="RIBOSOMAL PROTEIN L2"/>
    <property type="match status" value="1"/>
</dbReference>
<dbReference type="Pfam" id="PF00181">
    <property type="entry name" value="Ribosomal_L2"/>
    <property type="match status" value="1"/>
</dbReference>
<dbReference type="Pfam" id="PF03947">
    <property type="entry name" value="Ribosomal_L2_C"/>
    <property type="match status" value="1"/>
</dbReference>
<dbReference type="PIRSF" id="PIRSF002158">
    <property type="entry name" value="Ribosomal_L2"/>
    <property type="match status" value="1"/>
</dbReference>
<dbReference type="SMART" id="SM01383">
    <property type="entry name" value="Ribosomal_L2"/>
    <property type="match status" value="1"/>
</dbReference>
<dbReference type="SMART" id="SM01382">
    <property type="entry name" value="Ribosomal_L2_C"/>
    <property type="match status" value="1"/>
</dbReference>
<dbReference type="SUPFAM" id="SSF50249">
    <property type="entry name" value="Nucleic acid-binding proteins"/>
    <property type="match status" value="1"/>
</dbReference>
<dbReference type="SUPFAM" id="SSF50104">
    <property type="entry name" value="Translation proteins SH3-like domain"/>
    <property type="match status" value="1"/>
</dbReference>
<dbReference type="PROSITE" id="PS00467">
    <property type="entry name" value="RIBOSOMAL_L2"/>
    <property type="match status" value="1"/>
</dbReference>
<sequence length="278" mass="30608">MGIRKYKPTTPGRRGSSVADFVEITRSEPEKSLVRPLSKTGGRNSSGRITTRHIGGGHKRAYRLIDFRRHDKDGVPAKVAHIEYDPNRTARIALLHYVDGEKRYIIAPAKLKQGDRIENGPEADIKPGNNLPLRNIPVGTVIHAIEIRPGGGAKIARSAGASVQLVAREGRFAQLRMPSGEIRNVDVRCRATIGEVGNAEQSNINWGKAGRMRWKGKRPTVRGVAMNPIDHPHGGGEGKTSGGRHPVSPWGQPEGRTRRPGKESDKLIVRRRRTGKKR</sequence>
<keyword id="KW-1185">Reference proteome</keyword>
<keyword id="KW-0687">Ribonucleoprotein</keyword>
<keyword id="KW-0689">Ribosomal protein</keyword>
<keyword id="KW-0694">RNA-binding</keyword>
<keyword id="KW-0699">rRNA-binding</keyword>
<protein>
    <recommendedName>
        <fullName evidence="1">Large ribosomal subunit protein uL2</fullName>
    </recommendedName>
    <alternativeName>
        <fullName evidence="3">50S ribosomal protein L2</fullName>
    </alternativeName>
</protein>
<gene>
    <name evidence="1" type="primary">rplB</name>
    <name type="ordered locus">Krad_0691</name>
</gene>
<organism>
    <name type="scientific">Kineococcus radiotolerans (strain ATCC BAA-149 / DSM 14245 / SRS30216)</name>
    <dbReference type="NCBI Taxonomy" id="266940"/>
    <lineage>
        <taxon>Bacteria</taxon>
        <taxon>Bacillati</taxon>
        <taxon>Actinomycetota</taxon>
        <taxon>Actinomycetes</taxon>
        <taxon>Kineosporiales</taxon>
        <taxon>Kineosporiaceae</taxon>
        <taxon>Kineococcus</taxon>
    </lineage>
</organism>
<proteinExistence type="inferred from homology"/>
<accession>A6W5U1</accession>
<reference key="1">
    <citation type="journal article" date="2008" name="PLoS ONE">
        <title>Survival in nuclear waste, extreme resistance, and potential applications gleaned from the genome sequence of Kineococcus radiotolerans SRS30216.</title>
        <authorList>
            <person name="Bagwell C.E."/>
            <person name="Bhat S."/>
            <person name="Hawkins G.M."/>
            <person name="Smith B.W."/>
            <person name="Biswas T."/>
            <person name="Hoover T.R."/>
            <person name="Saunders E."/>
            <person name="Han C.S."/>
            <person name="Tsodikov O.V."/>
            <person name="Shimkets L.J."/>
        </authorList>
    </citation>
    <scope>NUCLEOTIDE SEQUENCE [LARGE SCALE GENOMIC DNA]</scope>
    <source>
        <strain>ATCC BAA-149 / DSM 14245 / SRS30216</strain>
    </source>
</reference>